<feature type="signal peptide" evidence="2">
    <location>
        <begin position="1"/>
        <end position="26"/>
    </location>
</feature>
<feature type="chain" id="PRO_0000379728" description="Defensin-like protein 266">
    <location>
        <begin position="27"/>
        <end position="81"/>
    </location>
</feature>
<feature type="disulfide bond" evidence="1">
    <location>
        <begin position="40"/>
        <end position="58"/>
    </location>
</feature>
<feature type="disulfide bond" evidence="1">
    <location>
        <begin position="46"/>
        <end position="63"/>
    </location>
</feature>
<feature type="disulfide bond" evidence="1">
    <location>
        <begin position="50"/>
        <end position="65"/>
    </location>
</feature>
<accession>Q2V4F0</accession>
<sequence length="81" mass="9103">MEKIVFRKIVFVAFLLSLSCLLEGEARMSGDVTIQRGGSCNNDNTCHDTCPGCRITQCIFRQCVCTRCNTPRSSLRIESHM</sequence>
<comment type="subcellular location">
    <subcellularLocation>
        <location evidence="1">Secreted</location>
    </subcellularLocation>
</comment>
<comment type="similarity">
    <text evidence="3">Belongs to the DEFL family.</text>
</comment>
<comment type="caution">
    <text evidence="3">Lacks 1 of the 4 disulfide bonds, which are conserved features of the family.</text>
</comment>
<name>DF266_ARATH</name>
<dbReference type="EMBL" id="AC004512">
    <property type="status" value="NOT_ANNOTATED_CDS"/>
    <property type="molecule type" value="Genomic_DNA"/>
</dbReference>
<dbReference type="EMBL" id="CP002684">
    <property type="protein sequence ID" value="AEE34364.1"/>
    <property type="molecule type" value="Genomic_DNA"/>
</dbReference>
<dbReference type="RefSeq" id="NP_001031237.1">
    <property type="nucleotide sequence ID" value="NM_001036160.2"/>
</dbReference>
<dbReference type="SMR" id="Q2V4F0"/>
<dbReference type="PaxDb" id="3702-AT1G65352.1"/>
<dbReference type="EnsemblPlants" id="AT1G65352.1">
    <property type="protein sequence ID" value="AT1G65352.1"/>
    <property type="gene ID" value="AT1G65352"/>
</dbReference>
<dbReference type="GeneID" id="3767638"/>
<dbReference type="Gramene" id="AT1G65352.1">
    <property type="protein sequence ID" value="AT1G65352.1"/>
    <property type="gene ID" value="AT1G65352"/>
</dbReference>
<dbReference type="KEGG" id="ath:AT1G65352"/>
<dbReference type="Araport" id="AT1G65352"/>
<dbReference type="TAIR" id="AT1G65352"/>
<dbReference type="HOGENOM" id="CLU_2472158_0_0_1"/>
<dbReference type="InParanoid" id="Q2V4F0"/>
<dbReference type="OMA" id="DNTCHDT"/>
<dbReference type="PhylomeDB" id="Q2V4F0"/>
<dbReference type="PRO" id="PR:Q2V4F0"/>
<dbReference type="Proteomes" id="UP000006548">
    <property type="component" value="Chromosome 1"/>
</dbReference>
<dbReference type="ExpressionAtlas" id="Q2V4F0">
    <property type="expression patterns" value="baseline"/>
</dbReference>
<dbReference type="GO" id="GO:0005576">
    <property type="term" value="C:extracellular region"/>
    <property type="evidence" value="ECO:0007669"/>
    <property type="project" value="UniProtKB-SubCell"/>
</dbReference>
<dbReference type="GO" id="GO:0003729">
    <property type="term" value="F:mRNA binding"/>
    <property type="evidence" value="ECO:0000314"/>
    <property type="project" value="TAIR"/>
</dbReference>
<dbReference type="GO" id="GO:0050832">
    <property type="term" value="P:defense response to fungus"/>
    <property type="evidence" value="ECO:0007669"/>
    <property type="project" value="UniProtKB-KW"/>
</dbReference>
<dbReference type="GO" id="GO:0031640">
    <property type="term" value="P:killing of cells of another organism"/>
    <property type="evidence" value="ECO:0007669"/>
    <property type="project" value="UniProtKB-KW"/>
</dbReference>
<gene>
    <name type="ordered locus">At1g65352</name>
    <name type="ORF">T8F5</name>
</gene>
<evidence type="ECO:0000250" key="1"/>
<evidence type="ECO:0000255" key="2"/>
<evidence type="ECO:0000305" key="3"/>
<proteinExistence type="evidence at transcript level"/>
<protein>
    <recommendedName>
        <fullName>Defensin-like protein 266</fullName>
    </recommendedName>
</protein>
<keyword id="KW-0929">Antimicrobial</keyword>
<keyword id="KW-1015">Disulfide bond</keyword>
<keyword id="KW-0295">Fungicide</keyword>
<keyword id="KW-0611">Plant defense</keyword>
<keyword id="KW-1185">Reference proteome</keyword>
<keyword id="KW-0964">Secreted</keyword>
<keyword id="KW-0732">Signal</keyword>
<reference key="1">
    <citation type="journal article" date="2000" name="Nature">
        <title>Sequence and analysis of chromosome 1 of the plant Arabidopsis thaliana.</title>
        <authorList>
            <person name="Theologis A."/>
            <person name="Ecker J.R."/>
            <person name="Palm C.J."/>
            <person name="Federspiel N.A."/>
            <person name="Kaul S."/>
            <person name="White O."/>
            <person name="Alonso J."/>
            <person name="Altafi H."/>
            <person name="Araujo R."/>
            <person name="Bowman C.L."/>
            <person name="Brooks S.Y."/>
            <person name="Buehler E."/>
            <person name="Chan A."/>
            <person name="Chao Q."/>
            <person name="Chen H."/>
            <person name="Cheuk R.F."/>
            <person name="Chin C.W."/>
            <person name="Chung M.K."/>
            <person name="Conn L."/>
            <person name="Conway A.B."/>
            <person name="Conway A.R."/>
            <person name="Creasy T.H."/>
            <person name="Dewar K."/>
            <person name="Dunn P."/>
            <person name="Etgu P."/>
            <person name="Feldblyum T.V."/>
            <person name="Feng J.-D."/>
            <person name="Fong B."/>
            <person name="Fujii C.Y."/>
            <person name="Gill J.E."/>
            <person name="Goldsmith A.D."/>
            <person name="Haas B."/>
            <person name="Hansen N.F."/>
            <person name="Hughes B."/>
            <person name="Huizar L."/>
            <person name="Hunter J.L."/>
            <person name="Jenkins J."/>
            <person name="Johnson-Hopson C."/>
            <person name="Khan S."/>
            <person name="Khaykin E."/>
            <person name="Kim C.J."/>
            <person name="Koo H.L."/>
            <person name="Kremenetskaia I."/>
            <person name="Kurtz D.B."/>
            <person name="Kwan A."/>
            <person name="Lam B."/>
            <person name="Langin-Hooper S."/>
            <person name="Lee A."/>
            <person name="Lee J.M."/>
            <person name="Lenz C.A."/>
            <person name="Li J.H."/>
            <person name="Li Y.-P."/>
            <person name="Lin X."/>
            <person name="Liu S.X."/>
            <person name="Liu Z.A."/>
            <person name="Luros J.S."/>
            <person name="Maiti R."/>
            <person name="Marziali A."/>
            <person name="Militscher J."/>
            <person name="Miranda M."/>
            <person name="Nguyen M."/>
            <person name="Nierman W.C."/>
            <person name="Osborne B.I."/>
            <person name="Pai G."/>
            <person name="Peterson J."/>
            <person name="Pham P.K."/>
            <person name="Rizzo M."/>
            <person name="Rooney T."/>
            <person name="Rowley D."/>
            <person name="Sakano H."/>
            <person name="Salzberg S.L."/>
            <person name="Schwartz J.R."/>
            <person name="Shinn P."/>
            <person name="Southwick A.M."/>
            <person name="Sun H."/>
            <person name="Tallon L.J."/>
            <person name="Tambunga G."/>
            <person name="Toriumi M.J."/>
            <person name="Town C.D."/>
            <person name="Utterback T."/>
            <person name="Van Aken S."/>
            <person name="Vaysberg M."/>
            <person name="Vysotskaia V.S."/>
            <person name="Walker M."/>
            <person name="Wu D."/>
            <person name="Yu G."/>
            <person name="Fraser C.M."/>
            <person name="Venter J.C."/>
            <person name="Davis R.W."/>
        </authorList>
    </citation>
    <scope>NUCLEOTIDE SEQUENCE [LARGE SCALE GENOMIC DNA]</scope>
    <source>
        <strain>cv. Columbia</strain>
    </source>
</reference>
<reference key="2">
    <citation type="journal article" date="2017" name="Plant J.">
        <title>Araport11: a complete reannotation of the Arabidopsis thaliana reference genome.</title>
        <authorList>
            <person name="Cheng C.Y."/>
            <person name="Krishnakumar V."/>
            <person name="Chan A.P."/>
            <person name="Thibaud-Nissen F."/>
            <person name="Schobel S."/>
            <person name="Town C.D."/>
        </authorList>
    </citation>
    <scope>GENOME REANNOTATION</scope>
    <source>
        <strain>cv. Columbia</strain>
    </source>
</reference>
<reference key="3">
    <citation type="journal article" date="2005" name="Plant Physiol.">
        <title>Genome organization of more than 300 defensin-like genes in Arabidopsis.</title>
        <authorList>
            <person name="Silverstein K.A.T."/>
            <person name="Graham M.A."/>
            <person name="Paape T.D."/>
            <person name="VandenBosch K.A."/>
        </authorList>
    </citation>
    <scope>GENE FAMILY</scope>
</reference>
<organism>
    <name type="scientific">Arabidopsis thaliana</name>
    <name type="common">Mouse-ear cress</name>
    <dbReference type="NCBI Taxonomy" id="3702"/>
    <lineage>
        <taxon>Eukaryota</taxon>
        <taxon>Viridiplantae</taxon>
        <taxon>Streptophyta</taxon>
        <taxon>Embryophyta</taxon>
        <taxon>Tracheophyta</taxon>
        <taxon>Spermatophyta</taxon>
        <taxon>Magnoliopsida</taxon>
        <taxon>eudicotyledons</taxon>
        <taxon>Gunneridae</taxon>
        <taxon>Pentapetalae</taxon>
        <taxon>rosids</taxon>
        <taxon>malvids</taxon>
        <taxon>Brassicales</taxon>
        <taxon>Brassicaceae</taxon>
        <taxon>Camelineae</taxon>
        <taxon>Arabidopsis</taxon>
    </lineage>
</organism>